<sequence>MSIRIKLKPGREKSLDRRHPWVFSSGVHNIKGKPLRGETVDVVAHDGRWLGRGAWSDASQIQVRVWTFDKEEAIDRDFFARRIARAQAGREALIREKGLTGYRLVGAESDGLPGITIDRYANVLVCQLLSAGADYWRETLVSVLAEQFPECAIYERSDVDSRKKEGLPLVTGLLHGELPAMPLIIEENGIKIAVDVEKGHKTGFYLDQRDNRAMAGRFVEGKSVLNCFCYTGTFGLYAAKAGAASIENVDVSTLALDTARHNMAINGLNDDHVTYSEADVFKLLRQYRDEGKTFDVIVLDPPKFADNKAQLNGACRGYKDINMIAMQLLKPGGTLLTFSCSGLMPADLFQKIVADAALDAGRDAQFIERLSQASDHPIGAAFPEGFYLKGLVARVW</sequence>
<dbReference type="EC" id="2.1.1.191" evidence="1"/>
<dbReference type="EMBL" id="CP000507">
    <property type="protein sequence ID" value="ABM01168.1"/>
    <property type="molecule type" value="Genomic_DNA"/>
</dbReference>
<dbReference type="RefSeq" id="WP_011761072.1">
    <property type="nucleotide sequence ID" value="NC_008700.1"/>
</dbReference>
<dbReference type="SMR" id="A1S9W1"/>
<dbReference type="STRING" id="326297.Sama_2965"/>
<dbReference type="KEGG" id="saz:Sama_2965"/>
<dbReference type="eggNOG" id="COG1092">
    <property type="taxonomic scope" value="Bacteria"/>
</dbReference>
<dbReference type="HOGENOM" id="CLU_014042_0_0_6"/>
<dbReference type="OrthoDB" id="9805492at2"/>
<dbReference type="Proteomes" id="UP000009175">
    <property type="component" value="Chromosome"/>
</dbReference>
<dbReference type="GO" id="GO:0005737">
    <property type="term" value="C:cytoplasm"/>
    <property type="evidence" value="ECO:0007669"/>
    <property type="project" value="UniProtKB-SubCell"/>
</dbReference>
<dbReference type="GO" id="GO:0003723">
    <property type="term" value="F:RNA binding"/>
    <property type="evidence" value="ECO:0007669"/>
    <property type="project" value="UniProtKB-KW"/>
</dbReference>
<dbReference type="GO" id="GO:0016434">
    <property type="term" value="F:rRNA (cytosine) methyltransferase activity"/>
    <property type="evidence" value="ECO:0007669"/>
    <property type="project" value="UniProtKB-UniRule"/>
</dbReference>
<dbReference type="CDD" id="cd02440">
    <property type="entry name" value="AdoMet_MTases"/>
    <property type="match status" value="1"/>
</dbReference>
<dbReference type="CDD" id="cd21153">
    <property type="entry name" value="PUA_RlmI"/>
    <property type="match status" value="1"/>
</dbReference>
<dbReference type="CDD" id="cd11572">
    <property type="entry name" value="RlmI_M_like"/>
    <property type="match status" value="1"/>
</dbReference>
<dbReference type="Gene3D" id="2.30.130.10">
    <property type="entry name" value="PUA domain"/>
    <property type="match status" value="1"/>
</dbReference>
<dbReference type="Gene3D" id="3.30.750.80">
    <property type="entry name" value="RNA methyltransferase domain (HRMD) like"/>
    <property type="match status" value="1"/>
</dbReference>
<dbReference type="Gene3D" id="3.40.50.150">
    <property type="entry name" value="Vaccinia Virus protein VP39"/>
    <property type="match status" value="1"/>
</dbReference>
<dbReference type="HAMAP" id="MF_01857">
    <property type="entry name" value="23SrRNA_methyltr_I"/>
    <property type="match status" value="1"/>
</dbReference>
<dbReference type="InterPro" id="IPR002478">
    <property type="entry name" value="PUA"/>
</dbReference>
<dbReference type="InterPro" id="IPR015947">
    <property type="entry name" value="PUA-like_sf"/>
</dbReference>
<dbReference type="InterPro" id="IPR036974">
    <property type="entry name" value="PUA_sf"/>
</dbReference>
<dbReference type="InterPro" id="IPR023542">
    <property type="entry name" value="RLMI"/>
</dbReference>
<dbReference type="InterPro" id="IPR041532">
    <property type="entry name" value="RlmI-like_PUA"/>
</dbReference>
<dbReference type="InterPro" id="IPR019614">
    <property type="entry name" value="SAM-dep_methyl-trfase"/>
</dbReference>
<dbReference type="InterPro" id="IPR029063">
    <property type="entry name" value="SAM-dependent_MTases_sf"/>
</dbReference>
<dbReference type="PANTHER" id="PTHR42873">
    <property type="entry name" value="RIBOSOMAL RNA LARGE SUBUNIT METHYLTRANSFERASE"/>
    <property type="match status" value="1"/>
</dbReference>
<dbReference type="PANTHER" id="PTHR42873:SF1">
    <property type="entry name" value="S-ADENOSYLMETHIONINE-DEPENDENT METHYLTRANSFERASE DOMAIN-CONTAINING PROTEIN"/>
    <property type="match status" value="1"/>
</dbReference>
<dbReference type="Pfam" id="PF10672">
    <property type="entry name" value="Methyltrans_SAM"/>
    <property type="match status" value="1"/>
</dbReference>
<dbReference type="Pfam" id="PF17785">
    <property type="entry name" value="PUA_3"/>
    <property type="match status" value="1"/>
</dbReference>
<dbReference type="SMART" id="SM00359">
    <property type="entry name" value="PUA"/>
    <property type="match status" value="1"/>
</dbReference>
<dbReference type="SUPFAM" id="SSF88697">
    <property type="entry name" value="PUA domain-like"/>
    <property type="match status" value="1"/>
</dbReference>
<dbReference type="SUPFAM" id="SSF53335">
    <property type="entry name" value="S-adenosyl-L-methionine-dependent methyltransferases"/>
    <property type="match status" value="1"/>
</dbReference>
<dbReference type="PROSITE" id="PS50890">
    <property type="entry name" value="PUA"/>
    <property type="match status" value="1"/>
</dbReference>
<evidence type="ECO:0000255" key="1">
    <source>
        <dbReference type="HAMAP-Rule" id="MF_01857"/>
    </source>
</evidence>
<gene>
    <name evidence="1" type="primary">rlmI</name>
    <name type="ordered locus">Sama_2965</name>
</gene>
<keyword id="KW-0963">Cytoplasm</keyword>
<keyword id="KW-0489">Methyltransferase</keyword>
<keyword id="KW-1185">Reference proteome</keyword>
<keyword id="KW-0694">RNA-binding</keyword>
<keyword id="KW-0698">rRNA processing</keyword>
<keyword id="KW-0949">S-adenosyl-L-methionine</keyword>
<keyword id="KW-0808">Transferase</keyword>
<protein>
    <recommendedName>
        <fullName evidence="1">Ribosomal RNA large subunit methyltransferase I</fullName>
        <ecNumber evidence="1">2.1.1.191</ecNumber>
    </recommendedName>
    <alternativeName>
        <fullName evidence="1">23S rRNA m5C1962 methyltransferase</fullName>
    </alternativeName>
    <alternativeName>
        <fullName evidence="1">rRNA (cytosine-C(5)-)-methyltransferase RlmI</fullName>
    </alternativeName>
</protein>
<proteinExistence type="inferred from homology"/>
<organism>
    <name type="scientific">Shewanella amazonensis (strain ATCC BAA-1098 / SB2B)</name>
    <dbReference type="NCBI Taxonomy" id="326297"/>
    <lineage>
        <taxon>Bacteria</taxon>
        <taxon>Pseudomonadati</taxon>
        <taxon>Pseudomonadota</taxon>
        <taxon>Gammaproteobacteria</taxon>
        <taxon>Alteromonadales</taxon>
        <taxon>Shewanellaceae</taxon>
        <taxon>Shewanella</taxon>
    </lineage>
</organism>
<name>RLMI_SHEAM</name>
<reference key="1">
    <citation type="submission" date="2006-12" db="EMBL/GenBank/DDBJ databases">
        <title>Complete sequence of Shewanella amazonensis SB2B.</title>
        <authorList>
            <consortium name="US DOE Joint Genome Institute"/>
            <person name="Copeland A."/>
            <person name="Lucas S."/>
            <person name="Lapidus A."/>
            <person name="Barry K."/>
            <person name="Detter J.C."/>
            <person name="Glavina del Rio T."/>
            <person name="Hammon N."/>
            <person name="Israni S."/>
            <person name="Dalin E."/>
            <person name="Tice H."/>
            <person name="Pitluck S."/>
            <person name="Munk A.C."/>
            <person name="Brettin T."/>
            <person name="Bruce D."/>
            <person name="Han C."/>
            <person name="Tapia R."/>
            <person name="Gilna P."/>
            <person name="Schmutz J."/>
            <person name="Larimer F."/>
            <person name="Land M."/>
            <person name="Hauser L."/>
            <person name="Kyrpides N."/>
            <person name="Mikhailova N."/>
            <person name="Fredrickson J."/>
            <person name="Richardson P."/>
        </authorList>
    </citation>
    <scope>NUCLEOTIDE SEQUENCE [LARGE SCALE GENOMIC DNA]</scope>
    <source>
        <strain>ATCC BAA-1098 / SB2B</strain>
    </source>
</reference>
<feature type="chain" id="PRO_0000366254" description="Ribosomal RNA large subunit methyltransferase I">
    <location>
        <begin position="1"/>
        <end position="396"/>
    </location>
</feature>
<feature type="domain" description="PUA" evidence="1">
    <location>
        <begin position="2"/>
        <end position="79"/>
    </location>
</feature>
<accession>A1S9W1</accession>
<comment type="function">
    <text evidence="1">Specifically methylates the cytosine at position 1962 (m5C1962) of 23S rRNA.</text>
</comment>
<comment type="catalytic activity">
    <reaction evidence="1">
        <text>cytidine(1962) in 23S rRNA + S-adenosyl-L-methionine = 5-methylcytidine(1962) in 23S rRNA + S-adenosyl-L-homocysteine + H(+)</text>
        <dbReference type="Rhea" id="RHEA:42912"/>
        <dbReference type="Rhea" id="RHEA-COMP:10382"/>
        <dbReference type="Rhea" id="RHEA-COMP:10386"/>
        <dbReference type="ChEBI" id="CHEBI:15378"/>
        <dbReference type="ChEBI" id="CHEBI:57856"/>
        <dbReference type="ChEBI" id="CHEBI:59789"/>
        <dbReference type="ChEBI" id="CHEBI:74483"/>
        <dbReference type="ChEBI" id="CHEBI:82748"/>
        <dbReference type="EC" id="2.1.1.191"/>
    </reaction>
</comment>
<comment type="subcellular location">
    <subcellularLocation>
        <location evidence="1">Cytoplasm</location>
    </subcellularLocation>
</comment>
<comment type="similarity">
    <text evidence="1">Belongs to the methyltransferase superfamily. RlmI family.</text>
</comment>